<feature type="chain" id="PRO_1000091112" description="UDP-N-acetylmuramate--L-alanine ligase">
    <location>
        <begin position="1"/>
        <end position="444"/>
    </location>
</feature>
<feature type="binding site" evidence="1">
    <location>
        <begin position="111"/>
        <end position="117"/>
    </location>
    <ligand>
        <name>ATP</name>
        <dbReference type="ChEBI" id="CHEBI:30616"/>
    </ligand>
</feature>
<protein>
    <recommendedName>
        <fullName evidence="1">UDP-N-acetylmuramate--L-alanine ligase</fullName>
        <ecNumber evidence="1">6.3.2.8</ecNumber>
    </recommendedName>
    <alternativeName>
        <fullName evidence="1">UDP-N-acetylmuramoyl-L-alanine synthetase</fullName>
    </alternativeName>
</protein>
<keyword id="KW-0067">ATP-binding</keyword>
<keyword id="KW-0131">Cell cycle</keyword>
<keyword id="KW-0132">Cell division</keyword>
<keyword id="KW-0133">Cell shape</keyword>
<keyword id="KW-0961">Cell wall biogenesis/degradation</keyword>
<keyword id="KW-0963">Cytoplasm</keyword>
<keyword id="KW-0436">Ligase</keyword>
<keyword id="KW-0547">Nucleotide-binding</keyword>
<keyword id="KW-0573">Peptidoglycan synthesis</keyword>
<keyword id="KW-1185">Reference proteome</keyword>
<comment type="function">
    <text evidence="1">Cell wall formation.</text>
</comment>
<comment type="catalytic activity">
    <reaction evidence="1">
        <text>UDP-N-acetyl-alpha-D-muramate + L-alanine + ATP = UDP-N-acetyl-alpha-D-muramoyl-L-alanine + ADP + phosphate + H(+)</text>
        <dbReference type="Rhea" id="RHEA:23372"/>
        <dbReference type="ChEBI" id="CHEBI:15378"/>
        <dbReference type="ChEBI" id="CHEBI:30616"/>
        <dbReference type="ChEBI" id="CHEBI:43474"/>
        <dbReference type="ChEBI" id="CHEBI:57972"/>
        <dbReference type="ChEBI" id="CHEBI:70757"/>
        <dbReference type="ChEBI" id="CHEBI:83898"/>
        <dbReference type="ChEBI" id="CHEBI:456216"/>
        <dbReference type="EC" id="6.3.2.8"/>
    </reaction>
</comment>
<comment type="pathway">
    <text evidence="1">Cell wall biogenesis; peptidoglycan biosynthesis.</text>
</comment>
<comment type="subcellular location">
    <subcellularLocation>
        <location evidence="1">Cytoplasm</location>
    </subcellularLocation>
</comment>
<comment type="similarity">
    <text evidence="1">Belongs to the MurCDEF family.</text>
</comment>
<reference key="1">
    <citation type="journal article" date="2008" name="J. Bacteriol.">
        <title>Complete genome sequence of Leuconostoc citreum KM20.</title>
        <authorList>
            <person name="Kim J.F."/>
            <person name="Jeong H."/>
            <person name="Lee J.-S."/>
            <person name="Choi S.-H."/>
            <person name="Ha M."/>
            <person name="Hur C.-G."/>
            <person name="Kim J.-S."/>
            <person name="Lee S."/>
            <person name="Park H.-S."/>
            <person name="Park Y.-H."/>
            <person name="Oh T.K."/>
        </authorList>
    </citation>
    <scope>NUCLEOTIDE SEQUENCE [LARGE SCALE GENOMIC DNA]</scope>
    <source>
        <strain>KM20</strain>
    </source>
</reference>
<proteinExistence type="inferred from homology"/>
<sequence length="444" mass="49474">MTKTYYFIGIKGTGMGPLAQILHDQGNTVLGSDIDSYTYTQAPLEAAGIKILPFSADNVDRYADAIFVRGNAFNDDHVEVQRALTLGVKMISYPDAVQEQIAQTTSIAVAGAHGKTSTTGLLAHVVKNIAPTSYLIGDGTGRGVPNSQFFVVEADEYRRHFKDYAPDYAILTNIDFDHPDYYEDINDVTRAFSDFANHVKKDIFAWGDDPYLRLLQPKADVYYYGTNSEQDDFVATNIRKSTQGSHFDVVFRGQSLGEFSVPLFGQHSILNALSVIAVAYMEKMDLSLIKSFLMTYQGVKRRFSEKQIADITVIDDYAHHPTEIDATLDAARQKYPNKQIIAIFQPHTYSRVIAYKDEFAKSLEAADKVYLANIFGSAREKQGAVTSAEIGAEISKFGGIIEEDNMSLLMPYENAVMVFMGAGDIEKYEFAYEKLLGQLRTDLQ</sequence>
<evidence type="ECO:0000255" key="1">
    <source>
        <dbReference type="HAMAP-Rule" id="MF_00046"/>
    </source>
</evidence>
<organism>
    <name type="scientific">Leuconostoc citreum (strain KM20)</name>
    <dbReference type="NCBI Taxonomy" id="349519"/>
    <lineage>
        <taxon>Bacteria</taxon>
        <taxon>Bacillati</taxon>
        <taxon>Bacillota</taxon>
        <taxon>Bacilli</taxon>
        <taxon>Lactobacillales</taxon>
        <taxon>Lactobacillaceae</taxon>
        <taxon>Leuconostoc</taxon>
    </lineage>
</organism>
<accession>B1MZK4</accession>
<gene>
    <name evidence="1" type="primary">murC</name>
    <name type="ordered locus">LCK_01129</name>
</gene>
<name>MURC_LEUCK</name>
<dbReference type="EC" id="6.3.2.8" evidence="1"/>
<dbReference type="EMBL" id="DQ489736">
    <property type="protein sequence ID" value="ACA82956.1"/>
    <property type="molecule type" value="Genomic_DNA"/>
</dbReference>
<dbReference type="RefSeq" id="WP_012305305.1">
    <property type="nucleotide sequence ID" value="NC_010471.1"/>
</dbReference>
<dbReference type="SMR" id="B1MZK4"/>
<dbReference type="STRING" id="349519.LCK_01129"/>
<dbReference type="KEGG" id="lci:LCK_01129"/>
<dbReference type="eggNOG" id="COG0773">
    <property type="taxonomic scope" value="Bacteria"/>
</dbReference>
<dbReference type="HOGENOM" id="CLU_028104_1_0_9"/>
<dbReference type="OrthoDB" id="9804126at2"/>
<dbReference type="UniPathway" id="UPA00219"/>
<dbReference type="Proteomes" id="UP000002166">
    <property type="component" value="Chromosome"/>
</dbReference>
<dbReference type="GO" id="GO:0005737">
    <property type="term" value="C:cytoplasm"/>
    <property type="evidence" value="ECO:0007669"/>
    <property type="project" value="UniProtKB-SubCell"/>
</dbReference>
<dbReference type="GO" id="GO:0005524">
    <property type="term" value="F:ATP binding"/>
    <property type="evidence" value="ECO:0007669"/>
    <property type="project" value="UniProtKB-UniRule"/>
</dbReference>
<dbReference type="GO" id="GO:0008763">
    <property type="term" value="F:UDP-N-acetylmuramate-L-alanine ligase activity"/>
    <property type="evidence" value="ECO:0007669"/>
    <property type="project" value="UniProtKB-UniRule"/>
</dbReference>
<dbReference type="GO" id="GO:0051301">
    <property type="term" value="P:cell division"/>
    <property type="evidence" value="ECO:0007669"/>
    <property type="project" value="UniProtKB-KW"/>
</dbReference>
<dbReference type="GO" id="GO:0071555">
    <property type="term" value="P:cell wall organization"/>
    <property type="evidence" value="ECO:0007669"/>
    <property type="project" value="UniProtKB-KW"/>
</dbReference>
<dbReference type="GO" id="GO:0009252">
    <property type="term" value="P:peptidoglycan biosynthetic process"/>
    <property type="evidence" value="ECO:0007669"/>
    <property type="project" value="UniProtKB-UniRule"/>
</dbReference>
<dbReference type="GO" id="GO:0008360">
    <property type="term" value="P:regulation of cell shape"/>
    <property type="evidence" value="ECO:0007669"/>
    <property type="project" value="UniProtKB-KW"/>
</dbReference>
<dbReference type="Gene3D" id="3.90.190.20">
    <property type="entry name" value="Mur ligase, C-terminal domain"/>
    <property type="match status" value="1"/>
</dbReference>
<dbReference type="Gene3D" id="3.40.1190.10">
    <property type="entry name" value="Mur-like, catalytic domain"/>
    <property type="match status" value="1"/>
</dbReference>
<dbReference type="Gene3D" id="3.40.50.720">
    <property type="entry name" value="NAD(P)-binding Rossmann-like Domain"/>
    <property type="match status" value="1"/>
</dbReference>
<dbReference type="HAMAP" id="MF_00046">
    <property type="entry name" value="MurC"/>
    <property type="match status" value="1"/>
</dbReference>
<dbReference type="InterPro" id="IPR036565">
    <property type="entry name" value="Mur-like_cat_sf"/>
</dbReference>
<dbReference type="InterPro" id="IPR004101">
    <property type="entry name" value="Mur_ligase_C"/>
</dbReference>
<dbReference type="InterPro" id="IPR036615">
    <property type="entry name" value="Mur_ligase_C_dom_sf"/>
</dbReference>
<dbReference type="InterPro" id="IPR013221">
    <property type="entry name" value="Mur_ligase_cen"/>
</dbReference>
<dbReference type="InterPro" id="IPR000713">
    <property type="entry name" value="Mur_ligase_N"/>
</dbReference>
<dbReference type="InterPro" id="IPR050061">
    <property type="entry name" value="MurCDEF_pg_biosynth"/>
</dbReference>
<dbReference type="InterPro" id="IPR005758">
    <property type="entry name" value="UDP-N-AcMur_Ala_ligase_MurC"/>
</dbReference>
<dbReference type="NCBIfam" id="TIGR01082">
    <property type="entry name" value="murC"/>
    <property type="match status" value="1"/>
</dbReference>
<dbReference type="PANTHER" id="PTHR43445:SF3">
    <property type="entry name" value="UDP-N-ACETYLMURAMATE--L-ALANINE LIGASE"/>
    <property type="match status" value="1"/>
</dbReference>
<dbReference type="PANTHER" id="PTHR43445">
    <property type="entry name" value="UDP-N-ACETYLMURAMATE--L-ALANINE LIGASE-RELATED"/>
    <property type="match status" value="1"/>
</dbReference>
<dbReference type="Pfam" id="PF01225">
    <property type="entry name" value="Mur_ligase"/>
    <property type="match status" value="1"/>
</dbReference>
<dbReference type="Pfam" id="PF02875">
    <property type="entry name" value="Mur_ligase_C"/>
    <property type="match status" value="1"/>
</dbReference>
<dbReference type="Pfam" id="PF08245">
    <property type="entry name" value="Mur_ligase_M"/>
    <property type="match status" value="1"/>
</dbReference>
<dbReference type="SUPFAM" id="SSF51984">
    <property type="entry name" value="MurCD N-terminal domain"/>
    <property type="match status" value="1"/>
</dbReference>
<dbReference type="SUPFAM" id="SSF53623">
    <property type="entry name" value="MurD-like peptide ligases, catalytic domain"/>
    <property type="match status" value="1"/>
</dbReference>
<dbReference type="SUPFAM" id="SSF53244">
    <property type="entry name" value="MurD-like peptide ligases, peptide-binding domain"/>
    <property type="match status" value="1"/>
</dbReference>